<organism>
    <name type="scientific">Yersinia pestis (strain Pestoides F)</name>
    <dbReference type="NCBI Taxonomy" id="386656"/>
    <lineage>
        <taxon>Bacteria</taxon>
        <taxon>Pseudomonadati</taxon>
        <taxon>Pseudomonadota</taxon>
        <taxon>Gammaproteobacteria</taxon>
        <taxon>Enterobacterales</taxon>
        <taxon>Yersiniaceae</taxon>
        <taxon>Yersinia</taxon>
    </lineage>
</organism>
<keyword id="KW-0687">Ribonucleoprotein</keyword>
<keyword id="KW-0689">Ribosomal protein</keyword>
<keyword id="KW-0694">RNA-binding</keyword>
<keyword id="KW-0699">rRNA-binding</keyword>
<proteinExistence type="inferred from homology"/>
<gene>
    <name evidence="1" type="primary">rplR</name>
    <name type="ordered locus">YPDSF_0149</name>
</gene>
<accession>A4TH08</accession>
<protein>
    <recommendedName>
        <fullName evidence="1">Large ribosomal subunit protein uL18</fullName>
    </recommendedName>
    <alternativeName>
        <fullName evidence="2">50S ribosomal protein L18</fullName>
    </alternativeName>
</protein>
<reference key="1">
    <citation type="submission" date="2007-02" db="EMBL/GenBank/DDBJ databases">
        <title>Complete sequence of chromosome of Yersinia pestis Pestoides F.</title>
        <authorList>
            <consortium name="US DOE Joint Genome Institute"/>
            <person name="Copeland A."/>
            <person name="Lucas S."/>
            <person name="Lapidus A."/>
            <person name="Barry K."/>
            <person name="Detter J.C."/>
            <person name="Glavina del Rio T."/>
            <person name="Hammon N."/>
            <person name="Israni S."/>
            <person name="Dalin E."/>
            <person name="Tice H."/>
            <person name="Pitluck S."/>
            <person name="Di Bartolo G."/>
            <person name="Chain P."/>
            <person name="Malfatti S."/>
            <person name="Shin M."/>
            <person name="Vergez L."/>
            <person name="Schmutz J."/>
            <person name="Larimer F."/>
            <person name="Land M."/>
            <person name="Hauser L."/>
            <person name="Worsham P."/>
            <person name="Chu M."/>
            <person name="Bearden S."/>
            <person name="Garcia E."/>
            <person name="Richardson P."/>
        </authorList>
    </citation>
    <scope>NUCLEOTIDE SEQUENCE [LARGE SCALE GENOMIC DNA]</scope>
    <source>
        <strain>Pestoides F</strain>
    </source>
</reference>
<comment type="function">
    <text evidence="1">This is one of the proteins that bind and probably mediate the attachment of the 5S RNA into the large ribosomal subunit, where it forms part of the central protuberance.</text>
</comment>
<comment type="subunit">
    <text evidence="1">Part of the 50S ribosomal subunit; part of the 5S rRNA/L5/L18/L25 subcomplex. Contacts the 5S and 23S rRNAs.</text>
</comment>
<comment type="similarity">
    <text evidence="1">Belongs to the universal ribosomal protein uL18 family.</text>
</comment>
<feature type="chain" id="PRO_1000053141" description="Large ribosomal subunit protein uL18">
    <location>
        <begin position="1"/>
        <end position="117"/>
    </location>
</feature>
<evidence type="ECO:0000255" key="1">
    <source>
        <dbReference type="HAMAP-Rule" id="MF_01337"/>
    </source>
</evidence>
<evidence type="ECO:0000305" key="2"/>
<dbReference type="EMBL" id="CP000668">
    <property type="protein sequence ID" value="ABP38571.1"/>
    <property type="molecule type" value="Genomic_DNA"/>
</dbReference>
<dbReference type="RefSeq" id="WP_002213336.1">
    <property type="nucleotide sequence ID" value="NZ_CP009715.1"/>
</dbReference>
<dbReference type="SMR" id="A4TH08"/>
<dbReference type="GeneID" id="97454247"/>
<dbReference type="KEGG" id="ypp:YPDSF_0149"/>
<dbReference type="PATRIC" id="fig|386656.14.peg.418"/>
<dbReference type="GO" id="GO:0022625">
    <property type="term" value="C:cytosolic large ribosomal subunit"/>
    <property type="evidence" value="ECO:0007669"/>
    <property type="project" value="TreeGrafter"/>
</dbReference>
<dbReference type="GO" id="GO:0008097">
    <property type="term" value="F:5S rRNA binding"/>
    <property type="evidence" value="ECO:0007669"/>
    <property type="project" value="TreeGrafter"/>
</dbReference>
<dbReference type="GO" id="GO:0003735">
    <property type="term" value="F:structural constituent of ribosome"/>
    <property type="evidence" value="ECO:0007669"/>
    <property type="project" value="InterPro"/>
</dbReference>
<dbReference type="GO" id="GO:0006412">
    <property type="term" value="P:translation"/>
    <property type="evidence" value="ECO:0007669"/>
    <property type="project" value="UniProtKB-UniRule"/>
</dbReference>
<dbReference type="CDD" id="cd00432">
    <property type="entry name" value="Ribosomal_L18_L5e"/>
    <property type="match status" value="1"/>
</dbReference>
<dbReference type="FunFam" id="3.30.420.100:FF:000001">
    <property type="entry name" value="50S ribosomal protein L18"/>
    <property type="match status" value="1"/>
</dbReference>
<dbReference type="Gene3D" id="3.30.420.100">
    <property type="match status" value="1"/>
</dbReference>
<dbReference type="HAMAP" id="MF_01337_B">
    <property type="entry name" value="Ribosomal_uL18_B"/>
    <property type="match status" value="1"/>
</dbReference>
<dbReference type="InterPro" id="IPR004389">
    <property type="entry name" value="Ribosomal_uL18_bac-type"/>
</dbReference>
<dbReference type="InterPro" id="IPR005484">
    <property type="entry name" value="Ribosomal_uL18_bac/euk"/>
</dbReference>
<dbReference type="NCBIfam" id="TIGR00060">
    <property type="entry name" value="L18_bact"/>
    <property type="match status" value="1"/>
</dbReference>
<dbReference type="PANTHER" id="PTHR12899">
    <property type="entry name" value="39S RIBOSOMAL PROTEIN L18, MITOCHONDRIAL"/>
    <property type="match status" value="1"/>
</dbReference>
<dbReference type="PANTHER" id="PTHR12899:SF3">
    <property type="entry name" value="LARGE RIBOSOMAL SUBUNIT PROTEIN UL18M"/>
    <property type="match status" value="1"/>
</dbReference>
<dbReference type="Pfam" id="PF00861">
    <property type="entry name" value="Ribosomal_L18p"/>
    <property type="match status" value="1"/>
</dbReference>
<dbReference type="SUPFAM" id="SSF53137">
    <property type="entry name" value="Translational machinery components"/>
    <property type="match status" value="1"/>
</dbReference>
<name>RL18_YERPP</name>
<sequence length="117" mass="12811">MDKKAARIRRATRARRKLKELGATRLVVHRTPRHIYAQVIAPNGSEILVAASTVEKAINEQLKYAGNKDAAAAVGKTIAERALEKGITKVSFDRSGFQYHGRVQALADAAREAGLQF</sequence>